<comment type="function">
    <text evidence="1">Isomerase that catalyzes the conversion of deoxy-ribose 1-phosphate (dRib-1-P) and ribose 1-phosphate (Rib-1-P) to deoxy-ribose 5-phosphate (dRib-5-P) and ribose 5-phosphate (Rib-5-P), respectively.</text>
</comment>
<comment type="catalytic activity">
    <reaction evidence="1">
        <text>2-deoxy-alpha-D-ribose 1-phosphate = 2-deoxy-D-ribose 5-phosphate</text>
        <dbReference type="Rhea" id="RHEA:27658"/>
        <dbReference type="ChEBI" id="CHEBI:57259"/>
        <dbReference type="ChEBI" id="CHEBI:62877"/>
        <dbReference type="EC" id="5.4.2.7"/>
    </reaction>
</comment>
<comment type="catalytic activity">
    <reaction evidence="1">
        <text>alpha-D-ribose 1-phosphate = D-ribose 5-phosphate</text>
        <dbReference type="Rhea" id="RHEA:18793"/>
        <dbReference type="ChEBI" id="CHEBI:57720"/>
        <dbReference type="ChEBI" id="CHEBI:78346"/>
        <dbReference type="EC" id="5.4.2.7"/>
    </reaction>
</comment>
<comment type="cofactor">
    <cofactor evidence="1">
        <name>Mn(2+)</name>
        <dbReference type="ChEBI" id="CHEBI:29035"/>
    </cofactor>
    <text evidence="1">Binds 2 manganese ions.</text>
</comment>
<comment type="pathway">
    <text evidence="1">Carbohydrate degradation; 2-deoxy-D-ribose 1-phosphate degradation; D-glyceraldehyde 3-phosphate and acetaldehyde from 2-deoxy-alpha-D-ribose 1-phosphate: step 1/2.</text>
</comment>
<comment type="subcellular location">
    <subcellularLocation>
        <location evidence="1">Cytoplasm</location>
    </subcellularLocation>
</comment>
<comment type="similarity">
    <text evidence="1">Belongs to the phosphopentomutase family.</text>
</comment>
<sequence length="398" mass="44612">MKKYNRIFTIVVDSLGIGETEDSKEYGDIGVDTLRHISESVESFNIPNLQKLGLANLHSINHVEPVEKPLAYFMKMKEASVGKDTMTGHWEMMGLKIEKPFQTFTDTGFPQELLDELSKRTGRSIVGNKSASGTEILDELGEHQIKTGDMIVYTSADSVLQICGHEENEIFGLDELYRCCEIARDLTLKDEWKVGRVIARPYVGMKKGEFKRTSNRHDYALKPYGTTVLNTLKDNGLDVISVGKIKDIFDGEGITESNASKSSVHGMEQTLEIMDKDFKGVCFVNLVDFDALWGHRRNPIGYAEELEKFDVNLEKLLNKLKEDDLLIITADHGNDPTYKGTDHTREYVPFLAYSPSMTGNGLMETSNSFATIGATIAENFEIDMPKNTIGQSVLEKLL</sequence>
<evidence type="ECO:0000255" key="1">
    <source>
        <dbReference type="HAMAP-Rule" id="MF_00740"/>
    </source>
</evidence>
<reference key="1">
    <citation type="journal article" date="2003" name="Proc. Natl. Acad. Sci. U.S.A.">
        <title>The genome sequence of Clostridium tetani, the causative agent of tetanus disease.</title>
        <authorList>
            <person name="Brueggemann H."/>
            <person name="Baeumer S."/>
            <person name="Fricke W.F."/>
            <person name="Wiezer A."/>
            <person name="Liesegang H."/>
            <person name="Decker I."/>
            <person name="Herzberg C."/>
            <person name="Martinez-Arias R."/>
            <person name="Merkl R."/>
            <person name="Henne A."/>
            <person name="Gottschalk G."/>
        </authorList>
    </citation>
    <scope>NUCLEOTIDE SEQUENCE [LARGE SCALE GENOMIC DNA]</scope>
    <source>
        <strain>Massachusetts / E88</strain>
    </source>
</reference>
<name>DEOB_CLOTE</name>
<organism>
    <name type="scientific">Clostridium tetani (strain Massachusetts / E88)</name>
    <dbReference type="NCBI Taxonomy" id="212717"/>
    <lineage>
        <taxon>Bacteria</taxon>
        <taxon>Bacillati</taxon>
        <taxon>Bacillota</taxon>
        <taxon>Clostridia</taxon>
        <taxon>Eubacteriales</taxon>
        <taxon>Clostridiaceae</taxon>
        <taxon>Clostridium</taxon>
    </lineage>
</organism>
<accession>Q894Z2</accession>
<dbReference type="EC" id="5.4.2.7" evidence="1"/>
<dbReference type="EMBL" id="AE015927">
    <property type="protein sequence ID" value="AAO35948.1"/>
    <property type="molecule type" value="Genomic_DNA"/>
</dbReference>
<dbReference type="RefSeq" id="WP_011099610.1">
    <property type="nucleotide sequence ID" value="NC_004557.1"/>
</dbReference>
<dbReference type="SMR" id="Q894Z2"/>
<dbReference type="STRING" id="212717.CTC_01389"/>
<dbReference type="GeneID" id="24253205"/>
<dbReference type="KEGG" id="ctc:CTC_01389"/>
<dbReference type="HOGENOM" id="CLU_053861_0_0_9"/>
<dbReference type="OrthoDB" id="9769930at2"/>
<dbReference type="UniPathway" id="UPA00002">
    <property type="reaction ID" value="UER00467"/>
</dbReference>
<dbReference type="Proteomes" id="UP000001412">
    <property type="component" value="Chromosome"/>
</dbReference>
<dbReference type="GO" id="GO:0005829">
    <property type="term" value="C:cytosol"/>
    <property type="evidence" value="ECO:0007669"/>
    <property type="project" value="TreeGrafter"/>
</dbReference>
<dbReference type="GO" id="GO:0000287">
    <property type="term" value="F:magnesium ion binding"/>
    <property type="evidence" value="ECO:0007669"/>
    <property type="project" value="InterPro"/>
</dbReference>
<dbReference type="GO" id="GO:0030145">
    <property type="term" value="F:manganese ion binding"/>
    <property type="evidence" value="ECO:0007669"/>
    <property type="project" value="UniProtKB-UniRule"/>
</dbReference>
<dbReference type="GO" id="GO:0008973">
    <property type="term" value="F:phosphopentomutase activity"/>
    <property type="evidence" value="ECO:0007669"/>
    <property type="project" value="UniProtKB-UniRule"/>
</dbReference>
<dbReference type="GO" id="GO:0006018">
    <property type="term" value="P:2-deoxyribose 1-phosphate catabolic process"/>
    <property type="evidence" value="ECO:0007669"/>
    <property type="project" value="UniProtKB-UniRule"/>
</dbReference>
<dbReference type="GO" id="GO:0006015">
    <property type="term" value="P:5-phosphoribose 1-diphosphate biosynthetic process"/>
    <property type="evidence" value="ECO:0007669"/>
    <property type="project" value="UniProtKB-UniPathway"/>
</dbReference>
<dbReference type="GO" id="GO:0043094">
    <property type="term" value="P:metabolic compound salvage"/>
    <property type="evidence" value="ECO:0007669"/>
    <property type="project" value="InterPro"/>
</dbReference>
<dbReference type="GO" id="GO:0009117">
    <property type="term" value="P:nucleotide metabolic process"/>
    <property type="evidence" value="ECO:0007669"/>
    <property type="project" value="InterPro"/>
</dbReference>
<dbReference type="CDD" id="cd16009">
    <property type="entry name" value="PPM"/>
    <property type="match status" value="1"/>
</dbReference>
<dbReference type="FunFam" id="3.30.70.1250:FF:000001">
    <property type="entry name" value="Phosphopentomutase"/>
    <property type="match status" value="1"/>
</dbReference>
<dbReference type="Gene3D" id="3.40.720.10">
    <property type="entry name" value="Alkaline Phosphatase, subunit A"/>
    <property type="match status" value="1"/>
</dbReference>
<dbReference type="Gene3D" id="3.30.70.1250">
    <property type="entry name" value="Phosphopentomutase"/>
    <property type="match status" value="1"/>
</dbReference>
<dbReference type="HAMAP" id="MF_00740">
    <property type="entry name" value="Phosphopentomut"/>
    <property type="match status" value="1"/>
</dbReference>
<dbReference type="InterPro" id="IPR017850">
    <property type="entry name" value="Alkaline_phosphatase_core_sf"/>
</dbReference>
<dbReference type="InterPro" id="IPR010045">
    <property type="entry name" value="DeoB"/>
</dbReference>
<dbReference type="InterPro" id="IPR006124">
    <property type="entry name" value="Metalloenzyme"/>
</dbReference>
<dbReference type="InterPro" id="IPR024052">
    <property type="entry name" value="Phosphopentomutase_DeoB_cap_sf"/>
</dbReference>
<dbReference type="NCBIfam" id="TIGR01696">
    <property type="entry name" value="deoB"/>
    <property type="match status" value="1"/>
</dbReference>
<dbReference type="NCBIfam" id="NF003766">
    <property type="entry name" value="PRK05362.1"/>
    <property type="match status" value="1"/>
</dbReference>
<dbReference type="PANTHER" id="PTHR21110">
    <property type="entry name" value="PHOSPHOPENTOMUTASE"/>
    <property type="match status" value="1"/>
</dbReference>
<dbReference type="PANTHER" id="PTHR21110:SF0">
    <property type="entry name" value="PHOSPHOPENTOMUTASE"/>
    <property type="match status" value="1"/>
</dbReference>
<dbReference type="Pfam" id="PF01676">
    <property type="entry name" value="Metalloenzyme"/>
    <property type="match status" value="1"/>
</dbReference>
<dbReference type="PIRSF" id="PIRSF001491">
    <property type="entry name" value="Ppentomutase"/>
    <property type="match status" value="1"/>
</dbReference>
<dbReference type="SUPFAM" id="SSF53649">
    <property type="entry name" value="Alkaline phosphatase-like"/>
    <property type="match status" value="1"/>
</dbReference>
<dbReference type="SUPFAM" id="SSF143856">
    <property type="entry name" value="DeoB insert domain-like"/>
    <property type="match status" value="1"/>
</dbReference>
<feature type="chain" id="PRO_0000199817" description="Phosphopentomutase">
    <location>
        <begin position="1"/>
        <end position="398"/>
    </location>
</feature>
<feature type="binding site" evidence="1">
    <location>
        <position position="13"/>
    </location>
    <ligand>
        <name>Mn(2+)</name>
        <dbReference type="ChEBI" id="CHEBI:29035"/>
        <label>1</label>
    </ligand>
</feature>
<feature type="binding site" evidence="1">
    <location>
        <position position="290"/>
    </location>
    <ligand>
        <name>Mn(2+)</name>
        <dbReference type="ChEBI" id="CHEBI:29035"/>
        <label>2</label>
    </ligand>
</feature>
<feature type="binding site" evidence="1">
    <location>
        <position position="295"/>
    </location>
    <ligand>
        <name>Mn(2+)</name>
        <dbReference type="ChEBI" id="CHEBI:29035"/>
        <label>2</label>
    </ligand>
</feature>
<feature type="binding site" evidence="1">
    <location>
        <position position="331"/>
    </location>
    <ligand>
        <name>Mn(2+)</name>
        <dbReference type="ChEBI" id="CHEBI:29035"/>
        <label>1</label>
    </ligand>
</feature>
<feature type="binding site" evidence="1">
    <location>
        <position position="332"/>
    </location>
    <ligand>
        <name>Mn(2+)</name>
        <dbReference type="ChEBI" id="CHEBI:29035"/>
        <label>1</label>
    </ligand>
</feature>
<feature type="binding site" evidence="1">
    <location>
        <position position="343"/>
    </location>
    <ligand>
        <name>Mn(2+)</name>
        <dbReference type="ChEBI" id="CHEBI:29035"/>
        <label>2</label>
    </ligand>
</feature>
<gene>
    <name evidence="1" type="primary">deoB</name>
    <name type="ordered locus">CTC_01389</name>
</gene>
<proteinExistence type="inferred from homology"/>
<keyword id="KW-0963">Cytoplasm</keyword>
<keyword id="KW-0413">Isomerase</keyword>
<keyword id="KW-0464">Manganese</keyword>
<keyword id="KW-0479">Metal-binding</keyword>
<keyword id="KW-1185">Reference proteome</keyword>
<protein>
    <recommendedName>
        <fullName evidence="1">Phosphopentomutase</fullName>
        <ecNumber evidence="1">5.4.2.7</ecNumber>
    </recommendedName>
    <alternativeName>
        <fullName evidence="1">Phosphodeoxyribomutase</fullName>
    </alternativeName>
</protein>